<gene>
    <name type="primary">NTPCR</name>
</gene>
<organism>
    <name type="scientific">Bos taurus</name>
    <name type="common">Bovine</name>
    <dbReference type="NCBI Taxonomy" id="9913"/>
    <lineage>
        <taxon>Eukaryota</taxon>
        <taxon>Metazoa</taxon>
        <taxon>Chordata</taxon>
        <taxon>Craniata</taxon>
        <taxon>Vertebrata</taxon>
        <taxon>Euteleostomi</taxon>
        <taxon>Mammalia</taxon>
        <taxon>Eutheria</taxon>
        <taxon>Laurasiatheria</taxon>
        <taxon>Artiodactyla</taxon>
        <taxon>Ruminantia</taxon>
        <taxon>Pecora</taxon>
        <taxon>Bovidae</taxon>
        <taxon>Bovinae</taxon>
        <taxon>Bos</taxon>
    </lineage>
</organism>
<feature type="initiator methionine" description="Removed" evidence="2">
    <location>
        <position position="1"/>
    </location>
</feature>
<feature type="chain" id="PRO_0000278092" description="Cancer-related nucleoside-triphosphatase homolog">
    <location>
        <begin position="2"/>
        <end position="190"/>
    </location>
</feature>
<feature type="binding site" evidence="1">
    <location>
        <begin position="9"/>
        <end position="16"/>
    </location>
    <ligand>
        <name>ATP</name>
        <dbReference type="ChEBI" id="CHEBI:30616"/>
    </ligand>
</feature>
<feature type="binding site" evidence="1">
    <location>
        <begin position="109"/>
        <end position="116"/>
    </location>
    <ligand>
        <name>ATP</name>
        <dbReference type="ChEBI" id="CHEBI:30616"/>
    </ligand>
</feature>
<feature type="modified residue" description="N-acetylalanine" evidence="2">
    <location>
        <position position="2"/>
    </location>
</feature>
<feature type="modified residue" description="N6-acetyllysine" evidence="2">
    <location>
        <position position="165"/>
    </location>
</feature>
<protein>
    <recommendedName>
        <fullName>Cancer-related nucleoside-triphosphatase homolog</fullName>
        <shortName>NTPase</shortName>
        <ecNumber>3.6.1.15</ecNumber>
    </recommendedName>
    <alternativeName>
        <fullName>Nucleoside triphosphate phosphohydrolase</fullName>
    </alternativeName>
</protein>
<proteinExistence type="evidence at transcript level"/>
<reference key="1">
    <citation type="submission" date="2006-05" db="EMBL/GenBank/DDBJ databases">
        <authorList>
            <consortium name="NIH - Mammalian Gene Collection (MGC) project"/>
        </authorList>
    </citation>
    <scope>NUCLEOTIDE SEQUENCE [LARGE SCALE MRNA]</scope>
    <source>
        <strain>Hereford</strain>
        <tissue>Fetal pons</tissue>
    </source>
</reference>
<keyword id="KW-0007">Acetylation</keyword>
<keyword id="KW-0067">ATP-binding</keyword>
<keyword id="KW-0378">Hydrolase</keyword>
<keyword id="KW-0547">Nucleotide-binding</keyword>
<keyword id="KW-1185">Reference proteome</keyword>
<accession>Q1LZ78</accession>
<sequence>MARHVFLTGPPGVGKTTLIQKATEVLKSSGMPVDGFYTEEVRQGGRRIGFDVVTLSGIRGPLSRIGSEPLPGKRECRVGQYVVDLTSFEQLALPVLRNAGASGRPGQSICVIDEVGKMELFSQPFIQAVRQVLSIPGTVVLGTIPVPKGKPLALVEEIRTRKDVKVFSVTKENRNHLLPEIVTHMQSSRK</sequence>
<dbReference type="EC" id="3.6.1.15"/>
<dbReference type="EMBL" id="BC116158">
    <property type="protein sequence ID" value="AAI16159.1"/>
    <property type="molecule type" value="mRNA"/>
</dbReference>
<dbReference type="RefSeq" id="NP_001069284.1">
    <property type="nucleotide sequence ID" value="NM_001075816.2"/>
</dbReference>
<dbReference type="SMR" id="Q1LZ78"/>
<dbReference type="FunCoup" id="Q1LZ78">
    <property type="interactions" value="1156"/>
</dbReference>
<dbReference type="STRING" id="9913.ENSBTAP00000018514"/>
<dbReference type="PaxDb" id="9913-ENSBTAP00000018514"/>
<dbReference type="GeneID" id="521103"/>
<dbReference type="KEGG" id="bta:521103"/>
<dbReference type="CTD" id="84284"/>
<dbReference type="eggNOG" id="ENOG502QVJ8">
    <property type="taxonomic scope" value="Eukaryota"/>
</dbReference>
<dbReference type="InParanoid" id="Q1LZ78"/>
<dbReference type="OrthoDB" id="446244at2759"/>
<dbReference type="Proteomes" id="UP000009136">
    <property type="component" value="Unplaced"/>
</dbReference>
<dbReference type="GO" id="GO:0005524">
    <property type="term" value="F:ATP binding"/>
    <property type="evidence" value="ECO:0007669"/>
    <property type="project" value="UniProtKB-KW"/>
</dbReference>
<dbReference type="GO" id="GO:0016887">
    <property type="term" value="F:ATP hydrolysis activity"/>
    <property type="evidence" value="ECO:0007669"/>
    <property type="project" value="RHEA"/>
</dbReference>
<dbReference type="GO" id="GO:0043273">
    <property type="term" value="F:CTPase activity"/>
    <property type="evidence" value="ECO:0007669"/>
    <property type="project" value="RHEA"/>
</dbReference>
<dbReference type="GO" id="GO:0003924">
    <property type="term" value="F:GTPase activity"/>
    <property type="evidence" value="ECO:0007669"/>
    <property type="project" value="RHEA"/>
</dbReference>
<dbReference type="GO" id="GO:0017111">
    <property type="term" value="F:ribonucleoside triphosphate phosphatase activity"/>
    <property type="evidence" value="ECO:0000250"/>
    <property type="project" value="UniProtKB"/>
</dbReference>
<dbReference type="CDD" id="cd19482">
    <property type="entry name" value="RecA-like_Thep1"/>
    <property type="match status" value="1"/>
</dbReference>
<dbReference type="Gene3D" id="3.40.50.300">
    <property type="entry name" value="P-loop containing nucleotide triphosphate hydrolases"/>
    <property type="match status" value="1"/>
</dbReference>
<dbReference type="HAMAP" id="MF_00796">
    <property type="entry name" value="NTPase_1"/>
    <property type="match status" value="1"/>
</dbReference>
<dbReference type="InterPro" id="IPR004948">
    <property type="entry name" value="Nuc-triphosphatase_THEP1"/>
</dbReference>
<dbReference type="InterPro" id="IPR027417">
    <property type="entry name" value="P-loop_NTPase"/>
</dbReference>
<dbReference type="NCBIfam" id="NF010248">
    <property type="entry name" value="PRK13695.1"/>
    <property type="match status" value="1"/>
</dbReference>
<dbReference type="PANTHER" id="PTHR43146">
    <property type="entry name" value="CANCER-RELATED NUCLEOSIDE-TRIPHOSPHATASE"/>
    <property type="match status" value="1"/>
</dbReference>
<dbReference type="PANTHER" id="PTHR43146:SF1">
    <property type="entry name" value="CANCER-RELATED NUCLEOSIDE-TRIPHOSPHATASE"/>
    <property type="match status" value="1"/>
</dbReference>
<dbReference type="Pfam" id="PF03266">
    <property type="entry name" value="NTPase_1"/>
    <property type="match status" value="1"/>
</dbReference>
<dbReference type="SUPFAM" id="SSF52540">
    <property type="entry name" value="P-loop containing nucleoside triphosphate hydrolases"/>
    <property type="match status" value="1"/>
</dbReference>
<comment type="function">
    <text evidence="2">Has nucleotide phosphatase activity towards ATP, GTP, CTP, TTP and UTP. Hydrolyzes nucleoside diphosphates with lower efficiency.</text>
</comment>
<comment type="catalytic activity">
    <reaction evidence="2">
        <text>a ribonucleoside 5'-triphosphate + H2O = a ribonucleoside 5'-diphosphate + phosphate + H(+)</text>
        <dbReference type="Rhea" id="RHEA:23680"/>
        <dbReference type="ChEBI" id="CHEBI:15377"/>
        <dbReference type="ChEBI" id="CHEBI:15378"/>
        <dbReference type="ChEBI" id="CHEBI:43474"/>
        <dbReference type="ChEBI" id="CHEBI:57930"/>
        <dbReference type="ChEBI" id="CHEBI:61557"/>
        <dbReference type="EC" id="3.6.1.15"/>
    </reaction>
    <physiologicalReaction direction="left-to-right" evidence="2">
        <dbReference type="Rhea" id="RHEA:23681"/>
    </physiologicalReaction>
</comment>
<comment type="catalytic activity">
    <reaction evidence="2">
        <text>5-methyl-UTP + H2O = 5-methyl-UDP + phosphate + H(+)</text>
        <dbReference type="Rhea" id="RHEA:65580"/>
        <dbReference type="ChEBI" id="CHEBI:15377"/>
        <dbReference type="ChEBI" id="CHEBI:15378"/>
        <dbReference type="ChEBI" id="CHEBI:43474"/>
        <dbReference type="ChEBI" id="CHEBI:61417"/>
        <dbReference type="ChEBI" id="CHEBI:63527"/>
    </reaction>
    <physiologicalReaction direction="left-to-right" evidence="2">
        <dbReference type="Rhea" id="RHEA:65581"/>
    </physiologicalReaction>
</comment>
<comment type="catalytic activity">
    <reaction evidence="2">
        <text>CTP + H2O = CDP + phosphate + H(+)</text>
        <dbReference type="Rhea" id="RHEA:29387"/>
        <dbReference type="ChEBI" id="CHEBI:15377"/>
        <dbReference type="ChEBI" id="CHEBI:15378"/>
        <dbReference type="ChEBI" id="CHEBI:37563"/>
        <dbReference type="ChEBI" id="CHEBI:43474"/>
        <dbReference type="ChEBI" id="CHEBI:58069"/>
    </reaction>
    <physiologicalReaction direction="left-to-right" evidence="2">
        <dbReference type="Rhea" id="RHEA:29388"/>
    </physiologicalReaction>
</comment>
<comment type="catalytic activity">
    <reaction evidence="2">
        <text>ATP + H2O = ADP + phosphate + H(+)</text>
        <dbReference type="Rhea" id="RHEA:13065"/>
        <dbReference type="ChEBI" id="CHEBI:15377"/>
        <dbReference type="ChEBI" id="CHEBI:15378"/>
        <dbReference type="ChEBI" id="CHEBI:30616"/>
        <dbReference type="ChEBI" id="CHEBI:43474"/>
        <dbReference type="ChEBI" id="CHEBI:456216"/>
    </reaction>
    <physiologicalReaction direction="left-to-right" evidence="2">
        <dbReference type="Rhea" id="RHEA:13066"/>
    </physiologicalReaction>
</comment>
<comment type="catalytic activity">
    <reaction evidence="2">
        <text>GTP + H2O = GDP + phosphate + H(+)</text>
        <dbReference type="Rhea" id="RHEA:19669"/>
        <dbReference type="ChEBI" id="CHEBI:15377"/>
        <dbReference type="ChEBI" id="CHEBI:15378"/>
        <dbReference type="ChEBI" id="CHEBI:37565"/>
        <dbReference type="ChEBI" id="CHEBI:43474"/>
        <dbReference type="ChEBI" id="CHEBI:58189"/>
    </reaction>
    <physiologicalReaction direction="left-to-right" evidence="2">
        <dbReference type="Rhea" id="RHEA:19670"/>
    </physiologicalReaction>
</comment>
<comment type="subunit">
    <text evidence="2">Monomer.</text>
</comment>
<comment type="similarity">
    <text evidence="3">Belongs to the THEP1 NTPase family.</text>
</comment>
<evidence type="ECO:0000250" key="1"/>
<evidence type="ECO:0000250" key="2">
    <source>
        <dbReference type="UniProtKB" id="Q9BSD7"/>
    </source>
</evidence>
<evidence type="ECO:0000305" key="3"/>
<name>NTPCR_BOVIN</name>